<accession>Q1RKD0</accession>
<keyword id="KW-0004">4Fe-4S</keyword>
<keyword id="KW-0997">Cell inner membrane</keyword>
<keyword id="KW-1003">Cell membrane</keyword>
<keyword id="KW-0408">Iron</keyword>
<keyword id="KW-0411">Iron-sulfur</keyword>
<keyword id="KW-0472">Membrane</keyword>
<keyword id="KW-0479">Metal-binding</keyword>
<keyword id="KW-0520">NAD</keyword>
<keyword id="KW-0874">Quinone</keyword>
<keyword id="KW-0677">Repeat</keyword>
<keyword id="KW-1278">Translocase</keyword>
<keyword id="KW-0830">Ubiquinone</keyword>
<feature type="chain" id="PRO_0000245736" description="NADH-quinone oxidoreductase subunit I">
    <location>
        <begin position="1"/>
        <end position="159"/>
    </location>
</feature>
<feature type="domain" description="4Fe-4S ferredoxin-type 1" evidence="1">
    <location>
        <begin position="51"/>
        <end position="80"/>
    </location>
</feature>
<feature type="domain" description="4Fe-4S ferredoxin-type 2" evidence="1">
    <location>
        <begin position="90"/>
        <end position="119"/>
    </location>
</feature>
<feature type="binding site" evidence="1">
    <location>
        <position position="60"/>
    </location>
    <ligand>
        <name>[4Fe-4S] cluster</name>
        <dbReference type="ChEBI" id="CHEBI:49883"/>
        <label>1</label>
    </ligand>
</feature>
<feature type="binding site" evidence="1">
    <location>
        <position position="63"/>
    </location>
    <ligand>
        <name>[4Fe-4S] cluster</name>
        <dbReference type="ChEBI" id="CHEBI:49883"/>
        <label>1</label>
    </ligand>
</feature>
<feature type="binding site" evidence="1">
    <location>
        <position position="66"/>
    </location>
    <ligand>
        <name>[4Fe-4S] cluster</name>
        <dbReference type="ChEBI" id="CHEBI:49883"/>
        <label>1</label>
    </ligand>
</feature>
<feature type="binding site" evidence="1">
    <location>
        <position position="70"/>
    </location>
    <ligand>
        <name>[4Fe-4S] cluster</name>
        <dbReference type="ChEBI" id="CHEBI:49883"/>
        <label>2</label>
    </ligand>
</feature>
<feature type="binding site" evidence="1">
    <location>
        <position position="99"/>
    </location>
    <ligand>
        <name>[4Fe-4S] cluster</name>
        <dbReference type="ChEBI" id="CHEBI:49883"/>
        <label>2</label>
    </ligand>
</feature>
<feature type="binding site" evidence="1">
    <location>
        <position position="102"/>
    </location>
    <ligand>
        <name>[4Fe-4S] cluster</name>
        <dbReference type="ChEBI" id="CHEBI:49883"/>
        <label>2</label>
    </ligand>
</feature>
<feature type="binding site" evidence="1">
    <location>
        <position position="105"/>
    </location>
    <ligand>
        <name>[4Fe-4S] cluster</name>
        <dbReference type="ChEBI" id="CHEBI:49883"/>
        <label>2</label>
    </ligand>
</feature>
<feature type="binding site" evidence="1">
    <location>
        <position position="109"/>
    </location>
    <ligand>
        <name>[4Fe-4S] cluster</name>
        <dbReference type="ChEBI" id="CHEBI:49883"/>
        <label>1</label>
    </ligand>
</feature>
<proteinExistence type="inferred from homology"/>
<sequence>MINYLKSFFLYEIIRGLALTLKYFFKAKVTINYPYEKSPVSPRFKGEHALRRYENGEERCIACKLCEAICPAQAIVIEADEREDGSRRTTRYDIDMTKCIYCGLCQEACPVDAIVEGPNFEFASLTHTALIYDKEKLLQNGDRWEQALANKLHKDYEYR</sequence>
<dbReference type="EC" id="7.1.1.-" evidence="1"/>
<dbReference type="EMBL" id="CP000087">
    <property type="protein sequence ID" value="ABE04184.1"/>
    <property type="molecule type" value="Genomic_DNA"/>
</dbReference>
<dbReference type="RefSeq" id="WP_011476799.1">
    <property type="nucleotide sequence ID" value="NC_007940.1"/>
</dbReference>
<dbReference type="SMR" id="Q1RKD0"/>
<dbReference type="KEGG" id="rbe:RBE_0103"/>
<dbReference type="eggNOG" id="COG1143">
    <property type="taxonomic scope" value="Bacteria"/>
</dbReference>
<dbReference type="HOGENOM" id="CLU_067218_5_1_5"/>
<dbReference type="OrthoDB" id="9808559at2"/>
<dbReference type="Proteomes" id="UP000001951">
    <property type="component" value="Chromosome"/>
</dbReference>
<dbReference type="GO" id="GO:0005886">
    <property type="term" value="C:plasma membrane"/>
    <property type="evidence" value="ECO:0007669"/>
    <property type="project" value="UniProtKB-SubCell"/>
</dbReference>
<dbReference type="GO" id="GO:0051539">
    <property type="term" value="F:4 iron, 4 sulfur cluster binding"/>
    <property type="evidence" value="ECO:0007669"/>
    <property type="project" value="UniProtKB-KW"/>
</dbReference>
<dbReference type="GO" id="GO:0005506">
    <property type="term" value="F:iron ion binding"/>
    <property type="evidence" value="ECO:0007669"/>
    <property type="project" value="UniProtKB-UniRule"/>
</dbReference>
<dbReference type="GO" id="GO:0050136">
    <property type="term" value="F:NADH:ubiquinone reductase (non-electrogenic) activity"/>
    <property type="evidence" value="ECO:0007669"/>
    <property type="project" value="UniProtKB-UniRule"/>
</dbReference>
<dbReference type="GO" id="GO:0048038">
    <property type="term" value="F:quinone binding"/>
    <property type="evidence" value="ECO:0007669"/>
    <property type="project" value="UniProtKB-KW"/>
</dbReference>
<dbReference type="GO" id="GO:0009060">
    <property type="term" value="P:aerobic respiration"/>
    <property type="evidence" value="ECO:0007669"/>
    <property type="project" value="TreeGrafter"/>
</dbReference>
<dbReference type="FunFam" id="3.30.70.3270:FF:000001">
    <property type="entry name" value="NADH-quinone oxidoreductase subunit I 1"/>
    <property type="match status" value="1"/>
</dbReference>
<dbReference type="Gene3D" id="3.30.70.3270">
    <property type="match status" value="1"/>
</dbReference>
<dbReference type="HAMAP" id="MF_01351">
    <property type="entry name" value="NDH1_NuoI"/>
    <property type="match status" value="1"/>
</dbReference>
<dbReference type="InterPro" id="IPR017896">
    <property type="entry name" value="4Fe4S_Fe-S-bd"/>
</dbReference>
<dbReference type="InterPro" id="IPR017900">
    <property type="entry name" value="4Fe4S_Fe_S_CS"/>
</dbReference>
<dbReference type="InterPro" id="IPR010226">
    <property type="entry name" value="NADH_quinone_OxRdtase_chainI"/>
</dbReference>
<dbReference type="NCBIfam" id="TIGR01971">
    <property type="entry name" value="NuoI"/>
    <property type="match status" value="1"/>
</dbReference>
<dbReference type="NCBIfam" id="NF004538">
    <property type="entry name" value="PRK05888.1-4"/>
    <property type="match status" value="1"/>
</dbReference>
<dbReference type="NCBIfam" id="NF004539">
    <property type="entry name" value="PRK05888.1-5"/>
    <property type="match status" value="1"/>
</dbReference>
<dbReference type="PANTHER" id="PTHR10849:SF20">
    <property type="entry name" value="NADH DEHYDROGENASE [UBIQUINONE] IRON-SULFUR PROTEIN 8, MITOCHONDRIAL"/>
    <property type="match status" value="1"/>
</dbReference>
<dbReference type="PANTHER" id="PTHR10849">
    <property type="entry name" value="NADH DEHYDROGENASE UBIQUINONE IRON-SULFUR PROTEIN 8, MITOCHONDRIAL"/>
    <property type="match status" value="1"/>
</dbReference>
<dbReference type="Pfam" id="PF12838">
    <property type="entry name" value="Fer4_7"/>
    <property type="match status" value="1"/>
</dbReference>
<dbReference type="SUPFAM" id="SSF54862">
    <property type="entry name" value="4Fe-4S ferredoxins"/>
    <property type="match status" value="1"/>
</dbReference>
<dbReference type="PROSITE" id="PS00198">
    <property type="entry name" value="4FE4S_FER_1"/>
    <property type="match status" value="2"/>
</dbReference>
<dbReference type="PROSITE" id="PS51379">
    <property type="entry name" value="4FE4S_FER_2"/>
    <property type="match status" value="2"/>
</dbReference>
<reference key="1">
    <citation type="journal article" date="2006" name="PLoS Genet.">
        <title>Genome sequence of Rickettsia bellii illuminates the role of amoebae in gene exchanges between intracellular pathogens.</title>
        <authorList>
            <person name="Ogata H."/>
            <person name="La Scola B."/>
            <person name="Audic S."/>
            <person name="Renesto P."/>
            <person name="Blanc G."/>
            <person name="Robert C."/>
            <person name="Fournier P.-E."/>
            <person name="Claverie J.-M."/>
            <person name="Raoult D."/>
        </authorList>
    </citation>
    <scope>NUCLEOTIDE SEQUENCE [LARGE SCALE GENOMIC DNA]</scope>
    <source>
        <strain>RML369-C</strain>
    </source>
</reference>
<gene>
    <name evidence="1" type="primary">nuoI</name>
    <name type="ordered locus">RBE_0103</name>
</gene>
<name>NUOI_RICBR</name>
<comment type="function">
    <text evidence="1">NDH-1 shuttles electrons from NADH, via FMN and iron-sulfur (Fe-S) centers, to quinones in the respiratory chain. The immediate electron acceptor for the enzyme in this species is believed to be ubiquinone. Couples the redox reaction to proton translocation (for every two electrons transferred, four hydrogen ions are translocated across the cytoplasmic membrane), and thus conserves the redox energy in a proton gradient.</text>
</comment>
<comment type="catalytic activity">
    <reaction evidence="1">
        <text>a quinone + NADH + 5 H(+)(in) = a quinol + NAD(+) + 4 H(+)(out)</text>
        <dbReference type="Rhea" id="RHEA:57888"/>
        <dbReference type="ChEBI" id="CHEBI:15378"/>
        <dbReference type="ChEBI" id="CHEBI:24646"/>
        <dbReference type="ChEBI" id="CHEBI:57540"/>
        <dbReference type="ChEBI" id="CHEBI:57945"/>
        <dbReference type="ChEBI" id="CHEBI:132124"/>
    </reaction>
</comment>
<comment type="cofactor">
    <cofactor evidence="1">
        <name>[4Fe-4S] cluster</name>
        <dbReference type="ChEBI" id="CHEBI:49883"/>
    </cofactor>
    <text evidence="1">Binds 2 [4Fe-4S] clusters per subunit.</text>
</comment>
<comment type="subunit">
    <text evidence="1">NDH-1 is composed of 14 different subunits. Subunits NuoA, H, J, K, L, M, N constitute the membrane sector of the complex.</text>
</comment>
<comment type="subcellular location">
    <subcellularLocation>
        <location evidence="1">Cell inner membrane</location>
        <topology evidence="1">Peripheral membrane protein</topology>
    </subcellularLocation>
</comment>
<comment type="similarity">
    <text evidence="1">Belongs to the complex I 23 kDa subunit family.</text>
</comment>
<protein>
    <recommendedName>
        <fullName evidence="1">NADH-quinone oxidoreductase subunit I</fullName>
        <ecNumber evidence="1">7.1.1.-</ecNumber>
    </recommendedName>
    <alternativeName>
        <fullName evidence="1">NADH dehydrogenase I subunit I</fullName>
    </alternativeName>
    <alternativeName>
        <fullName evidence="1">NDH-1 subunit I</fullName>
    </alternativeName>
</protein>
<organism>
    <name type="scientific">Rickettsia bellii (strain RML369-C)</name>
    <dbReference type="NCBI Taxonomy" id="336407"/>
    <lineage>
        <taxon>Bacteria</taxon>
        <taxon>Pseudomonadati</taxon>
        <taxon>Pseudomonadota</taxon>
        <taxon>Alphaproteobacteria</taxon>
        <taxon>Rickettsiales</taxon>
        <taxon>Rickettsiaceae</taxon>
        <taxon>Rickettsieae</taxon>
        <taxon>Rickettsia</taxon>
        <taxon>belli group</taxon>
    </lineage>
</organism>
<evidence type="ECO:0000255" key="1">
    <source>
        <dbReference type="HAMAP-Rule" id="MF_01351"/>
    </source>
</evidence>